<feature type="chain" id="PRO_0000082222" description="Taste receptor type 2 member 7">
    <location>
        <begin position="1"/>
        <end position="325"/>
    </location>
</feature>
<feature type="topological domain" description="Extracellular" evidence="2">
    <location>
        <begin position="1"/>
        <end position="9"/>
    </location>
</feature>
<feature type="transmembrane region" description="Helical; Name=1" evidence="2">
    <location>
        <begin position="10"/>
        <end position="30"/>
    </location>
</feature>
<feature type="topological domain" description="Cytoplasmic" evidence="2">
    <location>
        <begin position="31"/>
        <end position="55"/>
    </location>
</feature>
<feature type="transmembrane region" description="Helical; Name=2" evidence="2">
    <location>
        <begin position="56"/>
        <end position="76"/>
    </location>
</feature>
<feature type="topological domain" description="Extracellular" evidence="2">
    <location>
        <begin position="77"/>
        <end position="94"/>
    </location>
</feature>
<feature type="transmembrane region" description="Helical; Name=3" evidence="2">
    <location>
        <begin position="95"/>
        <end position="115"/>
    </location>
</feature>
<feature type="topological domain" description="Cytoplasmic" evidence="2">
    <location>
        <begin position="116"/>
        <end position="128"/>
    </location>
</feature>
<feature type="transmembrane region" description="Helical; Name=4" evidence="2">
    <location>
        <begin position="129"/>
        <end position="149"/>
    </location>
</feature>
<feature type="topological domain" description="Extracellular" evidence="2">
    <location>
        <begin position="150"/>
        <end position="187"/>
    </location>
</feature>
<feature type="transmembrane region" description="Helical; Name=5" evidence="2">
    <location>
        <begin position="188"/>
        <end position="208"/>
    </location>
</feature>
<feature type="topological domain" description="Cytoplasmic" evidence="2">
    <location>
        <begin position="209"/>
        <end position="235"/>
    </location>
</feature>
<feature type="transmembrane region" description="Helical; Name=6" evidence="2">
    <location>
        <begin position="236"/>
        <end position="256"/>
    </location>
</feature>
<feature type="topological domain" description="Extracellular" evidence="2">
    <location>
        <begin position="257"/>
        <end position="266"/>
    </location>
</feature>
<feature type="transmembrane region" description="Helical; Name=7" evidence="2">
    <location>
        <begin position="267"/>
        <end position="287"/>
    </location>
</feature>
<feature type="topological domain" description="Cytoplasmic" evidence="2">
    <location>
        <begin position="288"/>
        <end position="319"/>
    </location>
</feature>
<feature type="glycosylation site" description="N-linked (GlcNAc...) asparagine" evidence="2">
    <location>
        <position position="167"/>
    </location>
</feature>
<feature type="glycosylation site" description="N-linked (GlcNAc...) asparagine" evidence="2">
    <location>
        <position position="175"/>
    </location>
</feature>
<accession>Q646D6</accession>
<accession>Q5Y510</accession>
<dbReference type="EMBL" id="AY677136">
    <property type="protein sequence ID" value="AAV28565.1"/>
    <property type="molecule type" value="Genomic_DNA"/>
</dbReference>
<dbReference type="EMBL" id="AY724855">
    <property type="protein sequence ID" value="AAU21083.1"/>
    <property type="molecule type" value="Genomic_DNA"/>
</dbReference>
<dbReference type="RefSeq" id="XP_014202577.1">
    <property type="nucleotide sequence ID" value="XM_014347091.4"/>
</dbReference>
<dbReference type="SMR" id="Q646D6"/>
<dbReference type="STRING" id="9597.ENSPPAP00000003840"/>
<dbReference type="GlyCosmos" id="Q646D6">
    <property type="glycosylation" value="2 sites, No reported glycans"/>
</dbReference>
<dbReference type="Ensembl" id="ENSPPAT00000017708.1">
    <property type="protein sequence ID" value="ENSPPAP00000003840.1"/>
    <property type="gene ID" value="ENSPPAG00000016164.1"/>
</dbReference>
<dbReference type="GeneID" id="106635341"/>
<dbReference type="KEGG" id="pps:106635341"/>
<dbReference type="CTD" id="50837"/>
<dbReference type="GeneTree" id="ENSGT01100000263477"/>
<dbReference type="OMA" id="WRIDRVI"/>
<dbReference type="OrthoDB" id="7815at9604"/>
<dbReference type="Proteomes" id="UP000240080">
    <property type="component" value="Chromosome 12"/>
</dbReference>
<dbReference type="GO" id="GO:0005886">
    <property type="term" value="C:plasma membrane"/>
    <property type="evidence" value="ECO:0007669"/>
    <property type="project" value="UniProtKB-ARBA"/>
</dbReference>
<dbReference type="GO" id="GO:0033038">
    <property type="term" value="F:bitter taste receptor activity"/>
    <property type="evidence" value="ECO:0007669"/>
    <property type="project" value="Ensembl"/>
</dbReference>
<dbReference type="GO" id="GO:0004930">
    <property type="term" value="F:G protein-coupled receptor activity"/>
    <property type="evidence" value="ECO:0007669"/>
    <property type="project" value="UniProtKB-KW"/>
</dbReference>
<dbReference type="CDD" id="cd15023">
    <property type="entry name" value="7tm_TAS2R7-like"/>
    <property type="match status" value="1"/>
</dbReference>
<dbReference type="FunFam" id="1.20.1070.10:FF:000042">
    <property type="entry name" value="Taste receptor type 2 member 7"/>
    <property type="match status" value="1"/>
</dbReference>
<dbReference type="Gene3D" id="1.20.1070.10">
    <property type="entry name" value="Rhodopsin 7-helix transmembrane proteins"/>
    <property type="match status" value="1"/>
</dbReference>
<dbReference type="InterPro" id="IPR017452">
    <property type="entry name" value="GPCR_Rhodpsn_7TM"/>
</dbReference>
<dbReference type="InterPro" id="IPR007960">
    <property type="entry name" value="TAS2R"/>
</dbReference>
<dbReference type="PANTHER" id="PTHR11394">
    <property type="entry name" value="TASTE RECEPTOR TYPE 2"/>
    <property type="match status" value="1"/>
</dbReference>
<dbReference type="PANTHER" id="PTHR11394:SF58">
    <property type="entry name" value="TASTE RECEPTOR TYPE 2 MEMBER 7"/>
    <property type="match status" value="1"/>
</dbReference>
<dbReference type="Pfam" id="PF05296">
    <property type="entry name" value="TAS2R"/>
    <property type="match status" value="1"/>
</dbReference>
<dbReference type="SUPFAM" id="SSF81321">
    <property type="entry name" value="Family A G protein-coupled receptor-like"/>
    <property type="match status" value="1"/>
</dbReference>
<dbReference type="PROSITE" id="PS50262">
    <property type="entry name" value="G_PROTEIN_RECEP_F1_2"/>
    <property type="match status" value="1"/>
</dbReference>
<protein>
    <recommendedName>
        <fullName>Taste receptor type 2 member 7</fullName>
        <shortName>T2R7</shortName>
    </recommendedName>
</protein>
<reference key="1">
    <citation type="journal article" date="2004" name="Proc. Natl. Acad. Sci. U.S.A.">
        <title>Divergence of T2R chemosensory receptor families in humans, bonobos, and chimpanzees.</title>
        <authorList>
            <person name="Parry C.M."/>
            <person name="Erkner A."/>
            <person name="le Coutre J."/>
        </authorList>
    </citation>
    <scope>NUCLEOTIDE SEQUENCE [GENOMIC DNA]</scope>
</reference>
<reference key="2">
    <citation type="journal article" date="2005" name="Mol. Biol. Evol.">
        <title>Evolution of bitter taste receptors in humans and apes.</title>
        <authorList>
            <person name="Fischer A."/>
            <person name="Gilad Y."/>
            <person name="Man O."/>
            <person name="Paeaebo S."/>
        </authorList>
    </citation>
    <scope>NUCLEOTIDE SEQUENCE [GENOMIC DNA] OF 1-319</scope>
</reference>
<organism>
    <name type="scientific">Pan paniscus</name>
    <name type="common">Pygmy chimpanzee</name>
    <name type="synonym">Bonobo</name>
    <dbReference type="NCBI Taxonomy" id="9597"/>
    <lineage>
        <taxon>Eukaryota</taxon>
        <taxon>Metazoa</taxon>
        <taxon>Chordata</taxon>
        <taxon>Craniata</taxon>
        <taxon>Vertebrata</taxon>
        <taxon>Euteleostomi</taxon>
        <taxon>Mammalia</taxon>
        <taxon>Eutheria</taxon>
        <taxon>Euarchontoglires</taxon>
        <taxon>Primates</taxon>
        <taxon>Haplorrhini</taxon>
        <taxon>Catarrhini</taxon>
        <taxon>Hominidae</taxon>
        <taxon>Pan</taxon>
    </lineage>
</organism>
<evidence type="ECO:0000250" key="1"/>
<evidence type="ECO:0000255" key="2"/>
<evidence type="ECO:0000305" key="3"/>
<comment type="function">
    <text evidence="1">Gustducin-coupled receptor implicated in the perception of bitter compounds in the oral cavity and the gastrointestinal tract. Signals through PLCB2 and the calcium-regulated cation channel TRPM5 (By similarity).</text>
</comment>
<comment type="subcellular location">
    <subcellularLocation>
        <location>Membrane</location>
        <topology>Multi-pass membrane protein</topology>
    </subcellularLocation>
</comment>
<comment type="miscellaneous">
    <text>Several bitter taste receptors are expressed in a single taste receptor cell.</text>
</comment>
<comment type="similarity">
    <text evidence="3">Belongs to the G-protein coupled receptor T2R family.</text>
</comment>
<gene>
    <name type="primary">TAS2R7</name>
</gene>
<sequence length="325" mass="37413">MADKVQTTLLFLAVGEFSVGILGNAFIGLVNCMDWVKKRKIASIDLILTSLAISRICLLCVILLDCFILVLYPDVYATGKEMRIIDFFWTLTNHLSIWFATCLSIYYFFRIANFFHPLFLWMKWRIDRVISWILLGCVVLSVFISLPATENLNADFRFCVKAKRKTNLTWSCRVNKTQHASTKLFLNLATLLPFCVCLMSFFLLILSLRRHIRRMQLSATGCRDPSTEAHVRALKAVISFLLLFIAYYLSFLVATSSYFMPETELAVIFGESIALIYPSSHSFILILGNNKLRHASLKVIWKVMSILKGRKFQQHKQIGRETMLF</sequence>
<proteinExistence type="inferred from homology"/>
<name>TA2R7_PANPA</name>
<keyword id="KW-0297">G-protein coupled receptor</keyword>
<keyword id="KW-0325">Glycoprotein</keyword>
<keyword id="KW-0472">Membrane</keyword>
<keyword id="KW-0675">Receptor</keyword>
<keyword id="KW-1185">Reference proteome</keyword>
<keyword id="KW-0716">Sensory transduction</keyword>
<keyword id="KW-0919">Taste</keyword>
<keyword id="KW-0807">Transducer</keyword>
<keyword id="KW-0812">Transmembrane</keyword>
<keyword id="KW-1133">Transmembrane helix</keyword>